<evidence type="ECO:0000255" key="1">
    <source>
        <dbReference type="HAMAP-Rule" id="MF_00057"/>
    </source>
</evidence>
<sequence>MSDPLILIPARLAATRLPSKPLADIAGEPMIVHVWRRAVEAGIGPVVVATDTDAIAAAIEAQGGLAVMTQPDHPSGSDRLAEALEIVDPDGNHDVVVNVQGDLPTIDPAIIAASVTPLADPQVDIATLCAVIHRPEEMDDPNVVKIIGHTVGPNRLRALAFTRARAPWGEGPLFHHIGLYAYRRKALARFVALPQGELERREKLEQLRALEAGMRIDAMIVEDLPLGVDTPADLERARTLLAIRRLN</sequence>
<proteinExistence type="inferred from homology"/>
<name>KDSB_METPB</name>
<keyword id="KW-0963">Cytoplasm</keyword>
<keyword id="KW-0448">Lipopolysaccharide biosynthesis</keyword>
<keyword id="KW-0548">Nucleotidyltransferase</keyword>
<keyword id="KW-0808">Transferase</keyword>
<feature type="chain" id="PRO_0000370097" description="3-deoxy-manno-octulosonate cytidylyltransferase">
    <location>
        <begin position="1"/>
        <end position="247"/>
    </location>
</feature>
<organism>
    <name type="scientific">Methylorubrum populi (strain ATCC BAA-705 / NCIMB 13946 / BJ001)</name>
    <name type="common">Methylobacterium populi</name>
    <dbReference type="NCBI Taxonomy" id="441620"/>
    <lineage>
        <taxon>Bacteria</taxon>
        <taxon>Pseudomonadati</taxon>
        <taxon>Pseudomonadota</taxon>
        <taxon>Alphaproteobacteria</taxon>
        <taxon>Hyphomicrobiales</taxon>
        <taxon>Methylobacteriaceae</taxon>
        <taxon>Methylorubrum</taxon>
    </lineage>
</organism>
<dbReference type="EC" id="2.7.7.38" evidence="1"/>
<dbReference type="EMBL" id="CP001029">
    <property type="protein sequence ID" value="ACB78597.1"/>
    <property type="molecule type" value="Genomic_DNA"/>
</dbReference>
<dbReference type="RefSeq" id="WP_012452356.1">
    <property type="nucleotide sequence ID" value="NC_010725.1"/>
</dbReference>
<dbReference type="SMR" id="B1ZJ23"/>
<dbReference type="STRING" id="441620.Mpop_0419"/>
<dbReference type="KEGG" id="mpo:Mpop_0419"/>
<dbReference type="eggNOG" id="COG1212">
    <property type="taxonomic scope" value="Bacteria"/>
</dbReference>
<dbReference type="HOGENOM" id="CLU_065038_0_1_5"/>
<dbReference type="OrthoDB" id="9815559at2"/>
<dbReference type="UniPathway" id="UPA00030"/>
<dbReference type="UniPathway" id="UPA00358">
    <property type="reaction ID" value="UER00476"/>
</dbReference>
<dbReference type="Proteomes" id="UP000007136">
    <property type="component" value="Chromosome"/>
</dbReference>
<dbReference type="GO" id="GO:0005829">
    <property type="term" value="C:cytosol"/>
    <property type="evidence" value="ECO:0007669"/>
    <property type="project" value="TreeGrafter"/>
</dbReference>
<dbReference type="GO" id="GO:0008690">
    <property type="term" value="F:3-deoxy-manno-octulosonate cytidylyltransferase activity"/>
    <property type="evidence" value="ECO:0007669"/>
    <property type="project" value="UniProtKB-UniRule"/>
</dbReference>
<dbReference type="GO" id="GO:0033468">
    <property type="term" value="P:CMP-keto-3-deoxy-D-manno-octulosonic acid biosynthetic process"/>
    <property type="evidence" value="ECO:0007669"/>
    <property type="project" value="UniProtKB-UniRule"/>
</dbReference>
<dbReference type="GO" id="GO:0009103">
    <property type="term" value="P:lipopolysaccharide biosynthetic process"/>
    <property type="evidence" value="ECO:0007669"/>
    <property type="project" value="UniProtKB-UniRule"/>
</dbReference>
<dbReference type="CDD" id="cd02517">
    <property type="entry name" value="CMP-KDO-Synthetase"/>
    <property type="match status" value="1"/>
</dbReference>
<dbReference type="Gene3D" id="3.90.550.10">
    <property type="entry name" value="Spore Coat Polysaccharide Biosynthesis Protein SpsA, Chain A"/>
    <property type="match status" value="1"/>
</dbReference>
<dbReference type="HAMAP" id="MF_00057">
    <property type="entry name" value="KdsB"/>
    <property type="match status" value="1"/>
</dbReference>
<dbReference type="InterPro" id="IPR003329">
    <property type="entry name" value="Cytidylyl_trans"/>
</dbReference>
<dbReference type="InterPro" id="IPR004528">
    <property type="entry name" value="KdsB"/>
</dbReference>
<dbReference type="InterPro" id="IPR029044">
    <property type="entry name" value="Nucleotide-diphossugar_trans"/>
</dbReference>
<dbReference type="NCBIfam" id="TIGR00466">
    <property type="entry name" value="kdsB"/>
    <property type="match status" value="1"/>
</dbReference>
<dbReference type="NCBIfam" id="NF003948">
    <property type="entry name" value="PRK05450.1-1"/>
    <property type="match status" value="1"/>
</dbReference>
<dbReference type="NCBIfam" id="NF003952">
    <property type="entry name" value="PRK05450.1-5"/>
    <property type="match status" value="1"/>
</dbReference>
<dbReference type="PANTHER" id="PTHR42866">
    <property type="entry name" value="3-DEOXY-MANNO-OCTULOSONATE CYTIDYLYLTRANSFERASE"/>
    <property type="match status" value="1"/>
</dbReference>
<dbReference type="PANTHER" id="PTHR42866:SF2">
    <property type="entry name" value="3-DEOXY-MANNO-OCTULOSONATE CYTIDYLYLTRANSFERASE, MITOCHONDRIAL"/>
    <property type="match status" value="1"/>
</dbReference>
<dbReference type="Pfam" id="PF02348">
    <property type="entry name" value="CTP_transf_3"/>
    <property type="match status" value="1"/>
</dbReference>
<dbReference type="SUPFAM" id="SSF53448">
    <property type="entry name" value="Nucleotide-diphospho-sugar transferases"/>
    <property type="match status" value="1"/>
</dbReference>
<reference key="1">
    <citation type="submission" date="2008-04" db="EMBL/GenBank/DDBJ databases">
        <title>Complete sequence of chromosome of Methylobacterium populi BJ001.</title>
        <authorList>
            <consortium name="US DOE Joint Genome Institute"/>
            <person name="Copeland A."/>
            <person name="Lucas S."/>
            <person name="Lapidus A."/>
            <person name="Glavina del Rio T."/>
            <person name="Dalin E."/>
            <person name="Tice H."/>
            <person name="Bruce D."/>
            <person name="Goodwin L."/>
            <person name="Pitluck S."/>
            <person name="Chertkov O."/>
            <person name="Brettin T."/>
            <person name="Detter J.C."/>
            <person name="Han C."/>
            <person name="Kuske C.R."/>
            <person name="Schmutz J."/>
            <person name="Larimer F."/>
            <person name="Land M."/>
            <person name="Hauser L."/>
            <person name="Kyrpides N."/>
            <person name="Mikhailova N."/>
            <person name="Marx C."/>
            <person name="Richardson P."/>
        </authorList>
    </citation>
    <scope>NUCLEOTIDE SEQUENCE [LARGE SCALE GENOMIC DNA]</scope>
    <source>
        <strain>ATCC BAA-705 / NCIMB 13946 / BJ001</strain>
    </source>
</reference>
<gene>
    <name evidence="1" type="primary">kdsB</name>
    <name type="ordered locus">Mpop_0419</name>
</gene>
<protein>
    <recommendedName>
        <fullName evidence="1">3-deoxy-manno-octulosonate cytidylyltransferase</fullName>
        <ecNumber evidence="1">2.7.7.38</ecNumber>
    </recommendedName>
    <alternativeName>
        <fullName evidence="1">CMP-2-keto-3-deoxyoctulosonic acid synthase</fullName>
        <shortName evidence="1">CKS</shortName>
        <shortName evidence="1">CMP-KDO synthase</shortName>
    </alternativeName>
</protein>
<accession>B1ZJ23</accession>
<comment type="function">
    <text evidence="1">Activates KDO (a required 8-carbon sugar) for incorporation into bacterial lipopolysaccharide in Gram-negative bacteria.</text>
</comment>
<comment type="catalytic activity">
    <reaction evidence="1">
        <text>3-deoxy-alpha-D-manno-oct-2-ulosonate + CTP = CMP-3-deoxy-beta-D-manno-octulosonate + diphosphate</text>
        <dbReference type="Rhea" id="RHEA:23448"/>
        <dbReference type="ChEBI" id="CHEBI:33019"/>
        <dbReference type="ChEBI" id="CHEBI:37563"/>
        <dbReference type="ChEBI" id="CHEBI:85986"/>
        <dbReference type="ChEBI" id="CHEBI:85987"/>
        <dbReference type="EC" id="2.7.7.38"/>
    </reaction>
</comment>
<comment type="pathway">
    <text evidence="1">Nucleotide-sugar biosynthesis; CMP-3-deoxy-D-manno-octulosonate biosynthesis; CMP-3-deoxy-D-manno-octulosonate from 3-deoxy-D-manno-octulosonate and CTP: step 1/1.</text>
</comment>
<comment type="pathway">
    <text evidence="1">Bacterial outer membrane biogenesis; lipopolysaccharide biosynthesis.</text>
</comment>
<comment type="subcellular location">
    <subcellularLocation>
        <location evidence="1">Cytoplasm</location>
    </subcellularLocation>
</comment>
<comment type="similarity">
    <text evidence="1">Belongs to the KdsB family.</text>
</comment>